<proteinExistence type="evidence at protein level"/>
<evidence type="ECO:0000250" key="1">
    <source>
        <dbReference type="UniProtKB" id="P17497"/>
    </source>
</evidence>
<evidence type="ECO:0000250" key="2">
    <source>
        <dbReference type="UniProtKB" id="P21859"/>
    </source>
</evidence>
<evidence type="ECO:0000255" key="3">
    <source>
        <dbReference type="PROSITE-ProRule" id="PRU00068"/>
    </source>
</evidence>
<evidence type="ECO:0000269" key="4">
    <source>
    </source>
</evidence>
<evidence type="ECO:0000303" key="5">
    <source>
    </source>
</evidence>
<evidence type="ECO:0000305" key="6"/>
<evidence type="ECO:0000305" key="7">
    <source>
    </source>
</evidence>
<organism evidence="5">
    <name type="scientific">Crotalus simus</name>
    <name type="common">Central American rattlesnake</name>
    <name type="synonym">Caudisona simus</name>
    <dbReference type="NCBI Taxonomy" id="1043007"/>
    <lineage>
        <taxon>Eukaryota</taxon>
        <taxon>Metazoa</taxon>
        <taxon>Chordata</taxon>
        <taxon>Craniata</taxon>
        <taxon>Vertebrata</taxon>
        <taxon>Euteleostomi</taxon>
        <taxon>Lepidosauria</taxon>
        <taxon>Squamata</taxon>
        <taxon>Bifurcata</taxon>
        <taxon>Unidentata</taxon>
        <taxon>Episquamata</taxon>
        <taxon>Toxicofera</taxon>
        <taxon>Serpentes</taxon>
        <taxon>Colubroidea</taxon>
        <taxon>Viperidae</taxon>
        <taxon>Crotalinae</taxon>
        <taxon>Crotalus</taxon>
    </lineage>
</organism>
<name>VM2_CROSM</name>
<keyword id="KW-1217">Cell adhesion impairing toxin</keyword>
<keyword id="KW-0903">Direct protein sequencing</keyword>
<keyword id="KW-1015">Disulfide bond</keyword>
<keyword id="KW-1199">Hemostasis impairing toxin</keyword>
<keyword id="KW-1201">Platelet aggregation inhibiting toxin</keyword>
<keyword id="KW-0964">Secreted</keyword>
<keyword id="KW-0800">Toxin</keyword>
<comment type="function">
    <text evidence="4">Inhibits ADP- (IC(50)=56 nM) and collagen-induced (IC(50)=49 nM) aggregation of human platelets. In vitro, inhibits adhesion of endothelial cells to vitronectin, type-I collagen and, to a lower degree, fibronectin and laminin.</text>
</comment>
<comment type="subunit">
    <text evidence="1">Monomer.</text>
</comment>
<comment type="subcellular location">
    <subcellularLocation>
        <location evidence="4">Secreted</location>
    </subcellularLocation>
</comment>
<comment type="tissue specificity">
    <text evidence="7">Expressed by the venom gland.</text>
</comment>
<comment type="mass spectrometry" mass="7106.0" method="MALDI" evidence="4"/>
<comment type="miscellaneous">
    <text evidence="7">The disintegrin belongs to the medium disintegrin subfamily.</text>
</comment>
<comment type="similarity">
    <text evidence="6">Belongs to the venom metalloproteinase (M12B) family. P-II subfamily. P-IIa sub-subfamily.</text>
</comment>
<sequence length="71" mass="7512">AGEECDCGSPANPCCDAATCKLRPGAQCADGLCCDQCRFIKKGTVCRPARGDWNDDTCTGQSADCPRNPFH</sequence>
<feature type="chain" id="PRO_0000440582" description="Disintegrin simusmin" evidence="4">
    <location>
        <begin position="1"/>
        <end position="71"/>
    </location>
</feature>
<feature type="domain" description="Disintegrin" evidence="3">
    <location>
        <begin position="1"/>
        <end position="71"/>
    </location>
</feature>
<feature type="short sequence motif" description="Cell attachment site" evidence="3">
    <location>
        <begin position="50"/>
        <end position="52"/>
    </location>
</feature>
<feature type="disulfide bond" evidence="2">
    <location>
        <begin position="5"/>
        <end position="20"/>
    </location>
</feature>
<feature type="disulfide bond" evidence="2">
    <location>
        <begin position="7"/>
        <end position="15"/>
    </location>
</feature>
<feature type="disulfide bond" evidence="2">
    <location>
        <begin position="14"/>
        <end position="37"/>
    </location>
</feature>
<feature type="disulfide bond" evidence="2">
    <location>
        <begin position="28"/>
        <end position="34"/>
    </location>
</feature>
<feature type="disulfide bond" evidence="2">
    <location>
        <begin position="33"/>
        <end position="58"/>
    </location>
</feature>
<feature type="disulfide bond" evidence="2 3">
    <location>
        <begin position="46"/>
        <end position="65"/>
    </location>
</feature>
<reference evidence="6" key="1">
    <citation type="journal article" date="2014" name="Biochimie">
        <title>Isolation and characterization of four medium-size disintegrins from the venoms of Central American viperid snakes of the genera Atropoides, Bothrops, Cerrophidion and Crotalus.</title>
        <authorList>
            <person name="Angulo Y."/>
            <person name="Castro A."/>
            <person name="Lomonte B."/>
            <person name="Rucavado A."/>
            <person name="Fernandez J."/>
            <person name="Calvete J.J."/>
            <person name="Gutierrez J.M."/>
        </authorList>
    </citation>
    <scope>PROTEIN SEQUENCE</scope>
    <scope>FUNCTION</scope>
    <scope>SUBCELLULAR LOCATION</scope>
    <scope>MASS SPECTROMETRY</scope>
    <scope>IDENTIFICATION BY MASS SPECTROMETRY</scope>
    <source>
        <tissue evidence="5">Venom</tissue>
    </source>
</reference>
<protein>
    <recommendedName>
        <fullName evidence="5">Disintegrin simusmin</fullName>
    </recommendedName>
</protein>
<dbReference type="SMR" id="C0HJM4"/>
<dbReference type="GO" id="GO:0005576">
    <property type="term" value="C:extracellular region"/>
    <property type="evidence" value="ECO:0000314"/>
    <property type="project" value="UniProtKB"/>
</dbReference>
<dbReference type="GO" id="GO:0005886">
    <property type="term" value="C:plasma membrane"/>
    <property type="evidence" value="ECO:0007669"/>
    <property type="project" value="TreeGrafter"/>
</dbReference>
<dbReference type="GO" id="GO:0090729">
    <property type="term" value="F:toxin activity"/>
    <property type="evidence" value="ECO:0007669"/>
    <property type="project" value="UniProtKB-KW"/>
</dbReference>
<dbReference type="GO" id="GO:0044477">
    <property type="term" value="P:venom-mediated suppression of platelet aggregation"/>
    <property type="evidence" value="ECO:0000314"/>
    <property type="project" value="UniProtKB"/>
</dbReference>
<dbReference type="FunFam" id="4.10.70.10:FF:000005">
    <property type="entry name" value="Zinc metalloproteinase/disintegrin"/>
    <property type="match status" value="1"/>
</dbReference>
<dbReference type="Gene3D" id="4.10.70.10">
    <property type="entry name" value="Disintegrin domain"/>
    <property type="match status" value="1"/>
</dbReference>
<dbReference type="InterPro" id="IPR018358">
    <property type="entry name" value="Disintegrin_CS"/>
</dbReference>
<dbReference type="InterPro" id="IPR001762">
    <property type="entry name" value="Disintegrin_dom"/>
</dbReference>
<dbReference type="InterPro" id="IPR036436">
    <property type="entry name" value="Disintegrin_dom_sf"/>
</dbReference>
<dbReference type="PANTHER" id="PTHR11905">
    <property type="entry name" value="ADAM A DISINTEGRIN AND METALLOPROTEASE DOMAIN"/>
    <property type="match status" value="1"/>
</dbReference>
<dbReference type="PANTHER" id="PTHR11905:SF32">
    <property type="entry name" value="DISINTEGRIN AND METALLOPROTEINASE DOMAIN-CONTAINING PROTEIN 28"/>
    <property type="match status" value="1"/>
</dbReference>
<dbReference type="Pfam" id="PF00200">
    <property type="entry name" value="Disintegrin"/>
    <property type="match status" value="1"/>
</dbReference>
<dbReference type="PRINTS" id="PR00289">
    <property type="entry name" value="DISINTEGRIN"/>
</dbReference>
<dbReference type="SMART" id="SM00050">
    <property type="entry name" value="DISIN"/>
    <property type="match status" value="1"/>
</dbReference>
<dbReference type="SUPFAM" id="SSF57552">
    <property type="entry name" value="Blood coagulation inhibitor (disintegrin)"/>
    <property type="match status" value="1"/>
</dbReference>
<dbReference type="PROSITE" id="PS00427">
    <property type="entry name" value="DISINTEGRIN_1"/>
    <property type="match status" value="1"/>
</dbReference>
<dbReference type="PROSITE" id="PS50214">
    <property type="entry name" value="DISINTEGRIN_2"/>
    <property type="match status" value="1"/>
</dbReference>
<accession>C0HJM4</accession>